<proteinExistence type="inferred from homology"/>
<keyword id="KW-0150">Chloroplast</keyword>
<keyword id="KW-0934">Plastid</keyword>
<keyword id="KW-0687">Ribonucleoprotein</keyword>
<keyword id="KW-0689">Ribosomal protein</keyword>
<keyword id="KW-0694">RNA-binding</keyword>
<keyword id="KW-0699">rRNA-binding</keyword>
<accession>A4QJN4</accession>
<evidence type="ECO:0000250" key="1"/>
<evidence type="ECO:0000305" key="2"/>
<protein>
    <recommendedName>
        <fullName evidence="2">Small ribosomal subunit protein uS8c</fullName>
    </recommendedName>
    <alternativeName>
        <fullName>30S ribosomal protein S8, chloroplastic</fullName>
    </alternativeName>
</protein>
<comment type="function">
    <text evidence="1">One of the primary rRNA binding proteins, it binds directly to 16S rRNA central domain where it helps coordinate assembly of the platform of the 30S subunit.</text>
</comment>
<comment type="subunit">
    <text evidence="1">Part of the 30S ribosomal subunit.</text>
</comment>
<comment type="subcellular location">
    <subcellularLocation>
        <location>Plastid</location>
        <location>Chloroplast</location>
    </subcellularLocation>
</comment>
<comment type="similarity">
    <text evidence="2">Belongs to the universal ribosomal protein uS8 family.</text>
</comment>
<geneLocation type="chloroplast"/>
<name>RR8_AETGR</name>
<reference key="1">
    <citation type="submission" date="2007-03" db="EMBL/GenBank/DDBJ databases">
        <title>Sequencing analysis of Aethionema grandiflorum chloroplast DNA.</title>
        <authorList>
            <person name="Hosouchi T."/>
            <person name="Tsuruoka H."/>
            <person name="Kotani H."/>
        </authorList>
    </citation>
    <scope>NUCLEOTIDE SEQUENCE [LARGE SCALE GENOMIC DNA]</scope>
</reference>
<gene>
    <name type="primary">rps8</name>
</gene>
<organism>
    <name type="scientific">Aethionema grandiflorum</name>
    <name type="common">Persian stone-cress</name>
    <dbReference type="NCBI Taxonomy" id="72657"/>
    <lineage>
        <taxon>Eukaryota</taxon>
        <taxon>Viridiplantae</taxon>
        <taxon>Streptophyta</taxon>
        <taxon>Embryophyta</taxon>
        <taxon>Tracheophyta</taxon>
        <taxon>Spermatophyta</taxon>
        <taxon>Magnoliopsida</taxon>
        <taxon>eudicotyledons</taxon>
        <taxon>Gunneridae</taxon>
        <taxon>Pentapetalae</taxon>
        <taxon>rosids</taxon>
        <taxon>malvids</taxon>
        <taxon>Brassicales</taxon>
        <taxon>Brassicaceae</taxon>
        <taxon>Aethionemeae</taxon>
        <taxon>Aethionema</taxon>
    </lineage>
</organism>
<sequence length="134" mass="15470">MGKDTIADIITSIRNADMNRKGTVRIGSTNITESIVKILLREGFIENVRKHRENTQDFLILTLRHRRNKKESYKTIFNLKRISRPGLRIYSNSQRITRILGGIGIVILSTSRGIMTDREARLKRVGGEILCYIW</sequence>
<feature type="chain" id="PRO_0000290973" description="Small ribosomal subunit protein uS8c">
    <location>
        <begin position="1"/>
        <end position="134"/>
    </location>
</feature>
<dbReference type="EMBL" id="AP009367">
    <property type="protein sequence ID" value="BAF49889.1"/>
    <property type="molecule type" value="Genomic_DNA"/>
</dbReference>
<dbReference type="RefSeq" id="YP_001123065.1">
    <property type="nucleotide sequence ID" value="NC_009266.1"/>
</dbReference>
<dbReference type="SMR" id="A4QJN4"/>
<dbReference type="GeneID" id="4962271"/>
<dbReference type="GO" id="GO:0009507">
    <property type="term" value="C:chloroplast"/>
    <property type="evidence" value="ECO:0007669"/>
    <property type="project" value="UniProtKB-SubCell"/>
</dbReference>
<dbReference type="GO" id="GO:1990904">
    <property type="term" value="C:ribonucleoprotein complex"/>
    <property type="evidence" value="ECO:0007669"/>
    <property type="project" value="UniProtKB-KW"/>
</dbReference>
<dbReference type="GO" id="GO:0005840">
    <property type="term" value="C:ribosome"/>
    <property type="evidence" value="ECO:0007669"/>
    <property type="project" value="UniProtKB-KW"/>
</dbReference>
<dbReference type="GO" id="GO:0019843">
    <property type="term" value="F:rRNA binding"/>
    <property type="evidence" value="ECO:0007669"/>
    <property type="project" value="UniProtKB-UniRule"/>
</dbReference>
<dbReference type="GO" id="GO:0003735">
    <property type="term" value="F:structural constituent of ribosome"/>
    <property type="evidence" value="ECO:0007669"/>
    <property type="project" value="InterPro"/>
</dbReference>
<dbReference type="GO" id="GO:0006412">
    <property type="term" value="P:translation"/>
    <property type="evidence" value="ECO:0007669"/>
    <property type="project" value="UniProtKB-UniRule"/>
</dbReference>
<dbReference type="FunFam" id="3.30.1490.10:FF:000001">
    <property type="entry name" value="30S ribosomal protein S8"/>
    <property type="match status" value="1"/>
</dbReference>
<dbReference type="FunFam" id="3.30.1370.30:FF:000004">
    <property type="entry name" value="30S ribosomal protein S8, chloroplastic"/>
    <property type="match status" value="1"/>
</dbReference>
<dbReference type="Gene3D" id="3.30.1370.30">
    <property type="match status" value="1"/>
</dbReference>
<dbReference type="Gene3D" id="3.30.1490.10">
    <property type="match status" value="1"/>
</dbReference>
<dbReference type="HAMAP" id="MF_01302_B">
    <property type="entry name" value="Ribosomal_uS8_B"/>
    <property type="match status" value="1"/>
</dbReference>
<dbReference type="InterPro" id="IPR000630">
    <property type="entry name" value="Ribosomal_uS8"/>
</dbReference>
<dbReference type="InterPro" id="IPR047863">
    <property type="entry name" value="Ribosomal_uS8_CS"/>
</dbReference>
<dbReference type="InterPro" id="IPR035987">
    <property type="entry name" value="Ribosomal_uS8_sf"/>
</dbReference>
<dbReference type="NCBIfam" id="NF001109">
    <property type="entry name" value="PRK00136.1"/>
    <property type="match status" value="1"/>
</dbReference>
<dbReference type="PANTHER" id="PTHR11758">
    <property type="entry name" value="40S RIBOSOMAL PROTEIN S15A"/>
    <property type="match status" value="1"/>
</dbReference>
<dbReference type="Pfam" id="PF00410">
    <property type="entry name" value="Ribosomal_S8"/>
    <property type="match status" value="1"/>
</dbReference>
<dbReference type="SUPFAM" id="SSF56047">
    <property type="entry name" value="Ribosomal protein S8"/>
    <property type="match status" value="1"/>
</dbReference>
<dbReference type="PROSITE" id="PS00053">
    <property type="entry name" value="RIBOSOMAL_S8"/>
    <property type="match status" value="1"/>
</dbReference>